<dbReference type="EC" id="1.1.1.86" evidence="1"/>
<dbReference type="EMBL" id="AE016853">
    <property type="protein sequence ID" value="AAO54517.1"/>
    <property type="molecule type" value="Genomic_DNA"/>
</dbReference>
<dbReference type="RefSeq" id="NP_790822.1">
    <property type="nucleotide sequence ID" value="NC_004578.1"/>
</dbReference>
<dbReference type="RefSeq" id="WP_005614924.1">
    <property type="nucleotide sequence ID" value="NC_004578.1"/>
</dbReference>
<dbReference type="SMR" id="Q888N4"/>
<dbReference type="STRING" id="223283.PSPTO_0983"/>
<dbReference type="GeneID" id="61788347"/>
<dbReference type="KEGG" id="pst:PSPTO_0983"/>
<dbReference type="PATRIC" id="fig|223283.9.peg.992"/>
<dbReference type="eggNOG" id="COG0059">
    <property type="taxonomic scope" value="Bacteria"/>
</dbReference>
<dbReference type="HOGENOM" id="CLU_033821_0_1_6"/>
<dbReference type="OrthoDB" id="9804088at2"/>
<dbReference type="PhylomeDB" id="Q888N4"/>
<dbReference type="UniPathway" id="UPA00047">
    <property type="reaction ID" value="UER00056"/>
</dbReference>
<dbReference type="UniPathway" id="UPA00049">
    <property type="reaction ID" value="UER00060"/>
</dbReference>
<dbReference type="Proteomes" id="UP000002515">
    <property type="component" value="Chromosome"/>
</dbReference>
<dbReference type="GO" id="GO:0005829">
    <property type="term" value="C:cytosol"/>
    <property type="evidence" value="ECO:0007669"/>
    <property type="project" value="TreeGrafter"/>
</dbReference>
<dbReference type="GO" id="GO:0004455">
    <property type="term" value="F:ketol-acid reductoisomerase activity"/>
    <property type="evidence" value="ECO:0007669"/>
    <property type="project" value="UniProtKB-UniRule"/>
</dbReference>
<dbReference type="GO" id="GO:0000287">
    <property type="term" value="F:magnesium ion binding"/>
    <property type="evidence" value="ECO:0007669"/>
    <property type="project" value="UniProtKB-UniRule"/>
</dbReference>
<dbReference type="GO" id="GO:0050661">
    <property type="term" value="F:NADP binding"/>
    <property type="evidence" value="ECO:0007669"/>
    <property type="project" value="InterPro"/>
</dbReference>
<dbReference type="GO" id="GO:0009097">
    <property type="term" value="P:isoleucine biosynthetic process"/>
    <property type="evidence" value="ECO:0007669"/>
    <property type="project" value="UniProtKB-UniRule"/>
</dbReference>
<dbReference type="GO" id="GO:0009099">
    <property type="term" value="P:L-valine biosynthetic process"/>
    <property type="evidence" value="ECO:0007669"/>
    <property type="project" value="UniProtKB-UniRule"/>
</dbReference>
<dbReference type="FunFam" id="3.40.50.720:FF:000023">
    <property type="entry name" value="Ketol-acid reductoisomerase (NADP(+))"/>
    <property type="match status" value="1"/>
</dbReference>
<dbReference type="Gene3D" id="6.10.240.10">
    <property type="match status" value="1"/>
</dbReference>
<dbReference type="Gene3D" id="3.40.50.720">
    <property type="entry name" value="NAD(P)-binding Rossmann-like Domain"/>
    <property type="match status" value="1"/>
</dbReference>
<dbReference type="HAMAP" id="MF_00435">
    <property type="entry name" value="IlvC"/>
    <property type="match status" value="1"/>
</dbReference>
<dbReference type="InterPro" id="IPR008927">
    <property type="entry name" value="6-PGluconate_DH-like_C_sf"/>
</dbReference>
<dbReference type="InterPro" id="IPR013023">
    <property type="entry name" value="KARI"/>
</dbReference>
<dbReference type="InterPro" id="IPR000506">
    <property type="entry name" value="KARI_C"/>
</dbReference>
<dbReference type="InterPro" id="IPR013116">
    <property type="entry name" value="KARI_N"/>
</dbReference>
<dbReference type="InterPro" id="IPR014359">
    <property type="entry name" value="KARI_prok"/>
</dbReference>
<dbReference type="InterPro" id="IPR036291">
    <property type="entry name" value="NAD(P)-bd_dom_sf"/>
</dbReference>
<dbReference type="NCBIfam" id="TIGR00465">
    <property type="entry name" value="ilvC"/>
    <property type="match status" value="1"/>
</dbReference>
<dbReference type="NCBIfam" id="NF004017">
    <property type="entry name" value="PRK05479.1"/>
    <property type="match status" value="1"/>
</dbReference>
<dbReference type="NCBIfam" id="NF009940">
    <property type="entry name" value="PRK13403.1"/>
    <property type="match status" value="1"/>
</dbReference>
<dbReference type="PANTHER" id="PTHR21371">
    <property type="entry name" value="KETOL-ACID REDUCTOISOMERASE, MITOCHONDRIAL"/>
    <property type="match status" value="1"/>
</dbReference>
<dbReference type="PANTHER" id="PTHR21371:SF1">
    <property type="entry name" value="KETOL-ACID REDUCTOISOMERASE, MITOCHONDRIAL"/>
    <property type="match status" value="1"/>
</dbReference>
<dbReference type="Pfam" id="PF01450">
    <property type="entry name" value="KARI_C"/>
    <property type="match status" value="1"/>
</dbReference>
<dbReference type="Pfam" id="PF07991">
    <property type="entry name" value="KARI_N"/>
    <property type="match status" value="1"/>
</dbReference>
<dbReference type="PIRSF" id="PIRSF000116">
    <property type="entry name" value="IlvC_gammaproteo"/>
    <property type="match status" value="1"/>
</dbReference>
<dbReference type="SUPFAM" id="SSF48179">
    <property type="entry name" value="6-phosphogluconate dehydrogenase C-terminal domain-like"/>
    <property type="match status" value="1"/>
</dbReference>
<dbReference type="SUPFAM" id="SSF51735">
    <property type="entry name" value="NAD(P)-binding Rossmann-fold domains"/>
    <property type="match status" value="1"/>
</dbReference>
<dbReference type="PROSITE" id="PS51851">
    <property type="entry name" value="KARI_C"/>
    <property type="match status" value="1"/>
</dbReference>
<dbReference type="PROSITE" id="PS51850">
    <property type="entry name" value="KARI_N"/>
    <property type="match status" value="1"/>
</dbReference>
<evidence type="ECO:0000255" key="1">
    <source>
        <dbReference type="HAMAP-Rule" id="MF_00435"/>
    </source>
</evidence>
<evidence type="ECO:0000255" key="2">
    <source>
        <dbReference type="PROSITE-ProRule" id="PRU01197"/>
    </source>
</evidence>
<evidence type="ECO:0000255" key="3">
    <source>
        <dbReference type="PROSITE-ProRule" id="PRU01198"/>
    </source>
</evidence>
<feature type="chain" id="PRO_0000151344" description="Ketol-acid reductoisomerase (NADP(+))">
    <location>
        <begin position="1"/>
        <end position="338"/>
    </location>
</feature>
<feature type="domain" description="KARI N-terminal Rossmann" evidence="2">
    <location>
        <begin position="1"/>
        <end position="181"/>
    </location>
</feature>
<feature type="domain" description="KARI C-terminal knotted" evidence="3">
    <location>
        <begin position="182"/>
        <end position="327"/>
    </location>
</feature>
<feature type="active site" evidence="1">
    <location>
        <position position="107"/>
    </location>
</feature>
<feature type="binding site" evidence="1">
    <location>
        <begin position="24"/>
        <end position="27"/>
    </location>
    <ligand>
        <name>NADP(+)</name>
        <dbReference type="ChEBI" id="CHEBI:58349"/>
    </ligand>
</feature>
<feature type="binding site" evidence="1">
    <location>
        <position position="47"/>
    </location>
    <ligand>
        <name>NADP(+)</name>
        <dbReference type="ChEBI" id="CHEBI:58349"/>
    </ligand>
</feature>
<feature type="binding site" evidence="1">
    <location>
        <position position="50"/>
    </location>
    <ligand>
        <name>NADP(+)</name>
        <dbReference type="ChEBI" id="CHEBI:58349"/>
    </ligand>
</feature>
<feature type="binding site" evidence="1">
    <location>
        <position position="52"/>
    </location>
    <ligand>
        <name>NADP(+)</name>
        <dbReference type="ChEBI" id="CHEBI:58349"/>
    </ligand>
</feature>
<feature type="binding site" evidence="1">
    <location>
        <begin position="82"/>
        <end position="85"/>
    </location>
    <ligand>
        <name>NADP(+)</name>
        <dbReference type="ChEBI" id="CHEBI:58349"/>
    </ligand>
</feature>
<feature type="binding site" evidence="1">
    <location>
        <position position="133"/>
    </location>
    <ligand>
        <name>NADP(+)</name>
        <dbReference type="ChEBI" id="CHEBI:58349"/>
    </ligand>
</feature>
<feature type="binding site" evidence="1">
    <location>
        <position position="190"/>
    </location>
    <ligand>
        <name>Mg(2+)</name>
        <dbReference type="ChEBI" id="CHEBI:18420"/>
        <label>1</label>
    </ligand>
</feature>
<feature type="binding site" evidence="1">
    <location>
        <position position="190"/>
    </location>
    <ligand>
        <name>Mg(2+)</name>
        <dbReference type="ChEBI" id="CHEBI:18420"/>
        <label>2</label>
    </ligand>
</feature>
<feature type="binding site" evidence="1">
    <location>
        <position position="194"/>
    </location>
    <ligand>
        <name>Mg(2+)</name>
        <dbReference type="ChEBI" id="CHEBI:18420"/>
        <label>1</label>
    </ligand>
</feature>
<feature type="binding site" evidence="1">
    <location>
        <position position="226"/>
    </location>
    <ligand>
        <name>Mg(2+)</name>
        <dbReference type="ChEBI" id="CHEBI:18420"/>
        <label>2</label>
    </ligand>
</feature>
<feature type="binding site" evidence="1">
    <location>
        <position position="230"/>
    </location>
    <ligand>
        <name>Mg(2+)</name>
        <dbReference type="ChEBI" id="CHEBI:18420"/>
        <label>2</label>
    </ligand>
</feature>
<feature type="binding site" evidence="1">
    <location>
        <position position="251"/>
    </location>
    <ligand>
        <name>substrate</name>
    </ligand>
</feature>
<sequence length="338" mass="36384">MKVFYDKDCDLSIIQGKKVAIIGYGSQGHAQACNLKDSGVDVTVGLRKGSATVAKAEAHGLKVTDVASAVAAADLVMILTPDEFQSQLYKNEVEPNLKKGATLAFSHGFAIHYNQVVPRADLDVIMIAPKAPGHTVRTEFVKGGGIPDLIAVYQDASGNAKNVALSYASGVGGGRTGIIETTFKDETETDLFGEQAVLCGGTVELVKAGFETLVEAGYAPEMAYFECLHELKLIVDLMYEGGIANMNYSISNNAEYGEYVTGPEVINAESRQAMRNALKRIQDGEYAKMFITEGATGYPSMTAKRRNNAEHGIEVIGEKLRSMMPWIAANKIVDKDKN</sequence>
<comment type="function">
    <text evidence="1">Involved in the biosynthesis of branched-chain amino acids (BCAA). Catalyzes an alkyl-migration followed by a ketol-acid reduction of (S)-2-acetolactate (S2AL) to yield (R)-2,3-dihydroxy-isovalerate. In the isomerase reaction, S2AL is rearranged via a Mg-dependent methyl migration to produce 3-hydroxy-3-methyl-2-ketobutyrate (HMKB). In the reductase reaction, this 2-ketoacid undergoes a metal-dependent reduction by NADPH to yield (R)-2,3-dihydroxy-isovalerate.</text>
</comment>
<comment type="catalytic activity">
    <reaction evidence="1">
        <text>(2R)-2,3-dihydroxy-3-methylbutanoate + NADP(+) = (2S)-2-acetolactate + NADPH + H(+)</text>
        <dbReference type="Rhea" id="RHEA:22068"/>
        <dbReference type="ChEBI" id="CHEBI:15378"/>
        <dbReference type="ChEBI" id="CHEBI:49072"/>
        <dbReference type="ChEBI" id="CHEBI:57783"/>
        <dbReference type="ChEBI" id="CHEBI:58349"/>
        <dbReference type="ChEBI" id="CHEBI:58476"/>
        <dbReference type="EC" id="1.1.1.86"/>
    </reaction>
</comment>
<comment type="catalytic activity">
    <reaction evidence="1">
        <text>(2R,3R)-2,3-dihydroxy-3-methylpentanoate + NADP(+) = (S)-2-ethyl-2-hydroxy-3-oxobutanoate + NADPH + H(+)</text>
        <dbReference type="Rhea" id="RHEA:13493"/>
        <dbReference type="ChEBI" id="CHEBI:15378"/>
        <dbReference type="ChEBI" id="CHEBI:49256"/>
        <dbReference type="ChEBI" id="CHEBI:49258"/>
        <dbReference type="ChEBI" id="CHEBI:57783"/>
        <dbReference type="ChEBI" id="CHEBI:58349"/>
        <dbReference type="EC" id="1.1.1.86"/>
    </reaction>
</comment>
<comment type="cofactor">
    <cofactor evidence="1">
        <name>Mg(2+)</name>
        <dbReference type="ChEBI" id="CHEBI:18420"/>
    </cofactor>
    <text evidence="1">Binds 2 magnesium ions per subunit.</text>
</comment>
<comment type="pathway">
    <text evidence="1">Amino-acid biosynthesis; L-isoleucine biosynthesis; L-isoleucine from 2-oxobutanoate: step 2/4.</text>
</comment>
<comment type="pathway">
    <text evidence="1">Amino-acid biosynthesis; L-valine biosynthesis; L-valine from pyruvate: step 2/4.</text>
</comment>
<comment type="similarity">
    <text evidence="1">Belongs to the ketol-acid reductoisomerase family.</text>
</comment>
<gene>
    <name evidence="1" type="primary">ilvC</name>
    <name type="ordered locus">PSPTO_0983</name>
</gene>
<keyword id="KW-0028">Amino-acid biosynthesis</keyword>
<keyword id="KW-0100">Branched-chain amino acid biosynthesis</keyword>
<keyword id="KW-0460">Magnesium</keyword>
<keyword id="KW-0479">Metal-binding</keyword>
<keyword id="KW-0521">NADP</keyword>
<keyword id="KW-0560">Oxidoreductase</keyword>
<keyword id="KW-1185">Reference proteome</keyword>
<accession>Q888N4</accession>
<reference key="1">
    <citation type="journal article" date="2003" name="Proc. Natl. Acad. Sci. U.S.A.">
        <title>The complete genome sequence of the Arabidopsis and tomato pathogen Pseudomonas syringae pv. tomato DC3000.</title>
        <authorList>
            <person name="Buell C.R."/>
            <person name="Joardar V."/>
            <person name="Lindeberg M."/>
            <person name="Selengut J."/>
            <person name="Paulsen I.T."/>
            <person name="Gwinn M.L."/>
            <person name="Dodson R.J."/>
            <person name="DeBoy R.T."/>
            <person name="Durkin A.S."/>
            <person name="Kolonay J.F."/>
            <person name="Madupu R."/>
            <person name="Daugherty S.C."/>
            <person name="Brinkac L.M."/>
            <person name="Beanan M.J."/>
            <person name="Haft D.H."/>
            <person name="Nelson W.C."/>
            <person name="Davidsen T.M."/>
            <person name="Zafar N."/>
            <person name="Zhou L."/>
            <person name="Liu J."/>
            <person name="Yuan Q."/>
            <person name="Khouri H.M."/>
            <person name="Fedorova N.B."/>
            <person name="Tran B."/>
            <person name="Russell D."/>
            <person name="Berry K.J."/>
            <person name="Utterback T.R."/>
            <person name="Van Aken S.E."/>
            <person name="Feldblyum T.V."/>
            <person name="D'Ascenzo M."/>
            <person name="Deng W.-L."/>
            <person name="Ramos A.R."/>
            <person name="Alfano J.R."/>
            <person name="Cartinhour S."/>
            <person name="Chatterjee A.K."/>
            <person name="Delaney T.P."/>
            <person name="Lazarowitz S.G."/>
            <person name="Martin G.B."/>
            <person name="Schneider D.J."/>
            <person name="Tang X."/>
            <person name="Bender C.L."/>
            <person name="White O."/>
            <person name="Fraser C.M."/>
            <person name="Collmer A."/>
        </authorList>
    </citation>
    <scope>NUCLEOTIDE SEQUENCE [LARGE SCALE GENOMIC DNA]</scope>
    <source>
        <strain>ATCC BAA-871 / DC3000</strain>
    </source>
</reference>
<proteinExistence type="inferred from homology"/>
<organism>
    <name type="scientific">Pseudomonas syringae pv. tomato (strain ATCC BAA-871 / DC3000)</name>
    <dbReference type="NCBI Taxonomy" id="223283"/>
    <lineage>
        <taxon>Bacteria</taxon>
        <taxon>Pseudomonadati</taxon>
        <taxon>Pseudomonadota</taxon>
        <taxon>Gammaproteobacteria</taxon>
        <taxon>Pseudomonadales</taxon>
        <taxon>Pseudomonadaceae</taxon>
        <taxon>Pseudomonas</taxon>
    </lineage>
</organism>
<name>ILVC_PSESM</name>
<protein>
    <recommendedName>
        <fullName evidence="1">Ketol-acid reductoisomerase (NADP(+))</fullName>
        <shortName evidence="1">KARI</shortName>
        <ecNumber evidence="1">1.1.1.86</ecNumber>
    </recommendedName>
    <alternativeName>
        <fullName evidence="1">Acetohydroxy-acid isomeroreductase</fullName>
        <shortName evidence="1">AHIR</shortName>
    </alternativeName>
    <alternativeName>
        <fullName evidence="1">Alpha-keto-beta-hydroxylacyl reductoisomerase</fullName>
    </alternativeName>
    <alternativeName>
        <fullName evidence="1">Ketol-acid reductoisomerase type 1</fullName>
    </alternativeName>
    <alternativeName>
        <fullName evidence="1">Ketol-acid reductoisomerase type I</fullName>
    </alternativeName>
</protein>